<accession>O27372</accession>
<gene>
    <name evidence="1" type="primary">rpo11</name>
    <name evidence="1" type="synonym">rpoL</name>
    <name type="ordered locus">MTH_1317</name>
</gene>
<evidence type="ECO:0000255" key="1">
    <source>
        <dbReference type="HAMAP-Rule" id="MF_00261"/>
    </source>
</evidence>
<comment type="function">
    <text evidence="1">DNA-dependent RNA polymerase (RNAP) catalyzes the transcription of DNA into RNA using the four ribonucleoside triphosphates as substrates.</text>
</comment>
<comment type="catalytic activity">
    <reaction evidence="1">
        <text>RNA(n) + a ribonucleoside 5'-triphosphate = RNA(n+1) + diphosphate</text>
        <dbReference type="Rhea" id="RHEA:21248"/>
        <dbReference type="Rhea" id="RHEA-COMP:14527"/>
        <dbReference type="Rhea" id="RHEA-COMP:17342"/>
        <dbReference type="ChEBI" id="CHEBI:33019"/>
        <dbReference type="ChEBI" id="CHEBI:61557"/>
        <dbReference type="ChEBI" id="CHEBI:140395"/>
        <dbReference type="EC" id="2.7.7.6"/>
    </reaction>
</comment>
<comment type="subunit">
    <text evidence="1">Part of the RNA polymerase complex.</text>
</comment>
<comment type="subcellular location">
    <subcellularLocation>
        <location evidence="1">Cytoplasm</location>
    </subcellularLocation>
</comment>
<comment type="similarity">
    <text evidence="1">Belongs to the archaeal Rpo11/eukaryotic RPB11/RPC19 RNA polymerase subunit family.</text>
</comment>
<name>RPO11_METTH</name>
<keyword id="KW-0963">Cytoplasm</keyword>
<keyword id="KW-0240">DNA-directed RNA polymerase</keyword>
<keyword id="KW-0548">Nucleotidyltransferase</keyword>
<keyword id="KW-1185">Reference proteome</keyword>
<keyword id="KW-0804">Transcription</keyword>
<keyword id="KW-0808">Transferase</keyword>
<proteinExistence type="inferred from homology"/>
<protein>
    <recommendedName>
        <fullName evidence="1">DNA-directed RNA polymerase subunit Rpo11</fullName>
        <ecNumber evidence="1">2.7.7.6</ecNumber>
    </recommendedName>
    <alternativeName>
        <fullName evidence="1">DNA-directed RNA polymerase subunit L</fullName>
    </alternativeName>
</protein>
<organism>
    <name type="scientific">Methanothermobacter thermautotrophicus (strain ATCC 29096 / DSM 1053 / JCM 10044 / NBRC 100330 / Delta H)</name>
    <name type="common">Methanobacterium thermoautotrophicum</name>
    <dbReference type="NCBI Taxonomy" id="187420"/>
    <lineage>
        <taxon>Archaea</taxon>
        <taxon>Methanobacteriati</taxon>
        <taxon>Methanobacteriota</taxon>
        <taxon>Methanomada group</taxon>
        <taxon>Methanobacteria</taxon>
        <taxon>Methanobacteriales</taxon>
        <taxon>Methanobacteriaceae</taxon>
        <taxon>Methanothermobacter</taxon>
    </lineage>
</organism>
<dbReference type="EC" id="2.7.7.6" evidence="1"/>
<dbReference type="EMBL" id="AE000666">
    <property type="protein sequence ID" value="AAB85795.1"/>
    <property type="molecule type" value="Genomic_DNA"/>
</dbReference>
<dbReference type="PIR" id="A69042">
    <property type="entry name" value="A69042"/>
</dbReference>
<dbReference type="RefSeq" id="WP_010876930.1">
    <property type="nucleotide sequence ID" value="NC_000916.1"/>
</dbReference>
<dbReference type="SMR" id="O27372"/>
<dbReference type="FunCoup" id="O27372">
    <property type="interactions" value="9"/>
</dbReference>
<dbReference type="STRING" id="187420.MTH_1317"/>
<dbReference type="PaxDb" id="187420-MTH_1317"/>
<dbReference type="EnsemblBacteria" id="AAB85795">
    <property type="protein sequence ID" value="AAB85795"/>
    <property type="gene ID" value="MTH_1317"/>
</dbReference>
<dbReference type="GeneID" id="1471034"/>
<dbReference type="KEGG" id="mth:MTH_1317"/>
<dbReference type="HOGENOM" id="CLU_090381_5_0_2"/>
<dbReference type="InParanoid" id="O27372"/>
<dbReference type="Proteomes" id="UP000005223">
    <property type="component" value="Chromosome"/>
</dbReference>
<dbReference type="GO" id="GO:0005737">
    <property type="term" value="C:cytoplasm"/>
    <property type="evidence" value="ECO:0007669"/>
    <property type="project" value="UniProtKB-SubCell"/>
</dbReference>
<dbReference type="GO" id="GO:0000428">
    <property type="term" value="C:DNA-directed RNA polymerase complex"/>
    <property type="evidence" value="ECO:0007669"/>
    <property type="project" value="UniProtKB-KW"/>
</dbReference>
<dbReference type="GO" id="GO:0003677">
    <property type="term" value="F:DNA binding"/>
    <property type="evidence" value="ECO:0007669"/>
    <property type="project" value="InterPro"/>
</dbReference>
<dbReference type="GO" id="GO:0003899">
    <property type="term" value="F:DNA-directed RNA polymerase activity"/>
    <property type="evidence" value="ECO:0007669"/>
    <property type="project" value="UniProtKB-UniRule"/>
</dbReference>
<dbReference type="GO" id="GO:0046983">
    <property type="term" value="F:protein dimerization activity"/>
    <property type="evidence" value="ECO:0007669"/>
    <property type="project" value="InterPro"/>
</dbReference>
<dbReference type="GO" id="GO:0006351">
    <property type="term" value="P:DNA-templated transcription"/>
    <property type="evidence" value="ECO:0007669"/>
    <property type="project" value="UniProtKB-UniRule"/>
</dbReference>
<dbReference type="CDD" id="cd06927">
    <property type="entry name" value="RNAP_L"/>
    <property type="match status" value="1"/>
</dbReference>
<dbReference type="Gene3D" id="3.30.1360.10">
    <property type="entry name" value="RNA polymerase, RBP11-like subunit"/>
    <property type="match status" value="1"/>
</dbReference>
<dbReference type="HAMAP" id="MF_00261">
    <property type="entry name" value="RNApol_arch_Rpo11"/>
    <property type="match status" value="1"/>
</dbReference>
<dbReference type="InterPro" id="IPR036603">
    <property type="entry name" value="RBP11-like"/>
</dbReference>
<dbReference type="InterPro" id="IPR009025">
    <property type="entry name" value="RBP11-like_dimer"/>
</dbReference>
<dbReference type="InterPro" id="IPR008193">
    <property type="entry name" value="RNA_pol_Rpb11_13-16kDa_CS"/>
</dbReference>
<dbReference type="InterPro" id="IPR022905">
    <property type="entry name" value="Rpo11-like"/>
</dbReference>
<dbReference type="NCBIfam" id="NF002240">
    <property type="entry name" value="PRK01146.2-4"/>
    <property type="match status" value="1"/>
</dbReference>
<dbReference type="PANTHER" id="PTHR13946">
    <property type="entry name" value="DNA-DIRECTED RNA POLYMERASE I,II,III"/>
    <property type="match status" value="1"/>
</dbReference>
<dbReference type="PANTHER" id="PTHR13946:SF28">
    <property type="entry name" value="DNA-DIRECTED RNA POLYMERASES I AND III SUBUNIT RPAC2"/>
    <property type="match status" value="1"/>
</dbReference>
<dbReference type="Pfam" id="PF13656">
    <property type="entry name" value="RNA_pol_L_2"/>
    <property type="match status" value="1"/>
</dbReference>
<dbReference type="SUPFAM" id="SSF55257">
    <property type="entry name" value="RBP11-like subunits of RNA polymerase"/>
    <property type="match status" value="1"/>
</dbReference>
<dbReference type="PROSITE" id="PS01154">
    <property type="entry name" value="RNA_POL_L_13KD"/>
    <property type="match status" value="1"/>
</dbReference>
<reference key="1">
    <citation type="journal article" date="1997" name="J. Bacteriol.">
        <title>Complete genome sequence of Methanobacterium thermoautotrophicum deltaH: functional analysis and comparative genomics.</title>
        <authorList>
            <person name="Smith D.R."/>
            <person name="Doucette-Stamm L.A."/>
            <person name="Deloughery C."/>
            <person name="Lee H.-M."/>
            <person name="Dubois J."/>
            <person name="Aldredge T."/>
            <person name="Bashirzadeh R."/>
            <person name="Blakely D."/>
            <person name="Cook R."/>
            <person name="Gilbert K."/>
            <person name="Harrison D."/>
            <person name="Hoang L."/>
            <person name="Keagle P."/>
            <person name="Lumm W."/>
            <person name="Pothier B."/>
            <person name="Qiu D."/>
            <person name="Spadafora R."/>
            <person name="Vicare R."/>
            <person name="Wang Y."/>
            <person name="Wierzbowski J."/>
            <person name="Gibson R."/>
            <person name="Jiwani N."/>
            <person name="Caruso A."/>
            <person name="Bush D."/>
            <person name="Safer H."/>
            <person name="Patwell D."/>
            <person name="Prabhakar S."/>
            <person name="McDougall S."/>
            <person name="Shimer G."/>
            <person name="Goyal A."/>
            <person name="Pietrovski S."/>
            <person name="Church G.M."/>
            <person name="Daniels C.J."/>
            <person name="Mao J.-I."/>
            <person name="Rice P."/>
            <person name="Noelling J."/>
            <person name="Reeve J.N."/>
        </authorList>
    </citation>
    <scope>NUCLEOTIDE SEQUENCE [LARGE SCALE GENOMIC DNA]</scope>
    <source>
        <strain>ATCC 29096 / DSM 1053 / JCM 10044 / NBRC 100330 / Delta H</strain>
    </source>
</reference>
<sequence length="85" mass="9732">MEVILDKRNEMEIVFEGETHTLCNVLRSILMEDEKVKAAAYSIDHPIVGEPQLYIRAGSPKKSLKAAAETLRDRCDEFRRLIESL</sequence>
<feature type="chain" id="PRO_0000149330" description="DNA-directed RNA polymerase subunit Rpo11">
    <location>
        <begin position="1"/>
        <end position="85"/>
    </location>
</feature>